<name>DAPE_AGRFC</name>
<accession>A9CKC4</accession>
<organism>
    <name type="scientific">Agrobacterium fabrum (strain C58 / ATCC 33970)</name>
    <name type="common">Agrobacterium tumefaciens (strain C58)</name>
    <dbReference type="NCBI Taxonomy" id="176299"/>
    <lineage>
        <taxon>Bacteria</taxon>
        <taxon>Pseudomonadati</taxon>
        <taxon>Pseudomonadota</taxon>
        <taxon>Alphaproteobacteria</taxon>
        <taxon>Hyphomicrobiales</taxon>
        <taxon>Rhizobiaceae</taxon>
        <taxon>Rhizobium/Agrobacterium group</taxon>
        <taxon>Agrobacterium</taxon>
        <taxon>Agrobacterium tumefaciens complex</taxon>
    </lineage>
</organism>
<keyword id="KW-0028">Amino-acid biosynthesis</keyword>
<keyword id="KW-0170">Cobalt</keyword>
<keyword id="KW-0220">Diaminopimelate biosynthesis</keyword>
<keyword id="KW-0378">Hydrolase</keyword>
<keyword id="KW-0457">Lysine biosynthesis</keyword>
<keyword id="KW-0479">Metal-binding</keyword>
<keyword id="KW-1185">Reference proteome</keyword>
<keyword id="KW-0862">Zinc</keyword>
<reference key="1">
    <citation type="journal article" date="2001" name="Science">
        <title>Genome sequence of the plant pathogen and biotechnology agent Agrobacterium tumefaciens C58.</title>
        <authorList>
            <person name="Goodner B."/>
            <person name="Hinkle G."/>
            <person name="Gattung S."/>
            <person name="Miller N."/>
            <person name="Blanchard M."/>
            <person name="Qurollo B."/>
            <person name="Goldman B.S."/>
            <person name="Cao Y."/>
            <person name="Askenazi M."/>
            <person name="Halling C."/>
            <person name="Mullin L."/>
            <person name="Houmiel K."/>
            <person name="Gordon J."/>
            <person name="Vaudin M."/>
            <person name="Iartchouk O."/>
            <person name="Epp A."/>
            <person name="Liu F."/>
            <person name="Wollam C."/>
            <person name="Allinger M."/>
            <person name="Doughty D."/>
            <person name="Scott C."/>
            <person name="Lappas C."/>
            <person name="Markelz B."/>
            <person name="Flanagan C."/>
            <person name="Crowell C."/>
            <person name="Gurson J."/>
            <person name="Lomo C."/>
            <person name="Sear C."/>
            <person name="Strub G."/>
            <person name="Cielo C."/>
            <person name="Slater S."/>
        </authorList>
    </citation>
    <scope>NUCLEOTIDE SEQUENCE [LARGE SCALE GENOMIC DNA]</scope>
    <source>
        <strain>C58 / ATCC 33970</strain>
    </source>
</reference>
<reference key="2">
    <citation type="journal article" date="2001" name="Science">
        <title>The genome of the natural genetic engineer Agrobacterium tumefaciens C58.</title>
        <authorList>
            <person name="Wood D.W."/>
            <person name="Setubal J.C."/>
            <person name="Kaul R."/>
            <person name="Monks D.E."/>
            <person name="Kitajima J.P."/>
            <person name="Okura V.K."/>
            <person name="Zhou Y."/>
            <person name="Chen L."/>
            <person name="Wood G.E."/>
            <person name="Almeida N.F. Jr."/>
            <person name="Woo L."/>
            <person name="Chen Y."/>
            <person name="Paulsen I.T."/>
            <person name="Eisen J.A."/>
            <person name="Karp P.D."/>
            <person name="Bovee D. Sr."/>
            <person name="Chapman P."/>
            <person name="Clendenning J."/>
            <person name="Deatherage G."/>
            <person name="Gillet W."/>
            <person name="Grant C."/>
            <person name="Kutyavin T."/>
            <person name="Levy R."/>
            <person name="Li M.-J."/>
            <person name="McClelland E."/>
            <person name="Palmieri A."/>
            <person name="Raymond C."/>
            <person name="Rouse G."/>
            <person name="Saenphimmachak C."/>
            <person name="Wu Z."/>
            <person name="Romero P."/>
            <person name="Gordon D."/>
            <person name="Zhang S."/>
            <person name="Yoo H."/>
            <person name="Tao Y."/>
            <person name="Biddle P."/>
            <person name="Jung M."/>
            <person name="Krespan W."/>
            <person name="Perry M."/>
            <person name="Gordon-Kamm B."/>
            <person name="Liao L."/>
            <person name="Kim S."/>
            <person name="Hendrick C."/>
            <person name="Zhao Z.-Y."/>
            <person name="Dolan M."/>
            <person name="Chumley F."/>
            <person name="Tingey S.V."/>
            <person name="Tomb J.-F."/>
            <person name="Gordon M.P."/>
            <person name="Olson M.V."/>
            <person name="Nester E.W."/>
        </authorList>
    </citation>
    <scope>NUCLEOTIDE SEQUENCE [LARGE SCALE GENOMIC DNA]</scope>
    <source>
        <strain>C58 / ATCC 33970</strain>
    </source>
</reference>
<protein>
    <recommendedName>
        <fullName evidence="1">Succinyl-diaminopimelate desuccinylase</fullName>
        <shortName evidence="1">SDAP desuccinylase</shortName>
        <ecNumber evidence="1">3.5.1.18</ecNumber>
    </recommendedName>
    <alternativeName>
        <fullName evidence="1">N-succinyl-LL-2,6-diaminoheptanedioate amidohydrolase</fullName>
    </alternativeName>
</protein>
<gene>
    <name evidence="1" type="primary">dapE</name>
    <name type="ordered locus">Atu0370</name>
    <name type="ORF">AGR_C_647</name>
</gene>
<comment type="function">
    <text evidence="1">Catalyzes the hydrolysis of N-succinyl-L,L-diaminopimelic acid (SDAP), forming succinate and LL-2,6-diaminopimelate (DAP), an intermediate involved in the bacterial biosynthesis of lysine and meso-diaminopimelic acid, an essential component of bacterial cell walls.</text>
</comment>
<comment type="catalytic activity">
    <reaction evidence="1">
        <text>N-succinyl-(2S,6S)-2,6-diaminopimelate + H2O = (2S,6S)-2,6-diaminopimelate + succinate</text>
        <dbReference type="Rhea" id="RHEA:22608"/>
        <dbReference type="ChEBI" id="CHEBI:15377"/>
        <dbReference type="ChEBI" id="CHEBI:30031"/>
        <dbReference type="ChEBI" id="CHEBI:57609"/>
        <dbReference type="ChEBI" id="CHEBI:58087"/>
        <dbReference type="EC" id="3.5.1.18"/>
    </reaction>
</comment>
<comment type="cofactor">
    <cofactor evidence="1">
        <name>Zn(2+)</name>
        <dbReference type="ChEBI" id="CHEBI:29105"/>
    </cofactor>
    <cofactor evidence="1">
        <name>Co(2+)</name>
        <dbReference type="ChEBI" id="CHEBI:48828"/>
    </cofactor>
    <text evidence="1">Binds 2 Zn(2+) or Co(2+) ions per subunit.</text>
</comment>
<comment type="pathway">
    <text evidence="1">Amino-acid biosynthesis; L-lysine biosynthesis via DAP pathway; LL-2,6-diaminopimelate from (S)-tetrahydrodipicolinate (succinylase route): step 3/3.</text>
</comment>
<comment type="subunit">
    <text evidence="1">Homodimer.</text>
</comment>
<comment type="similarity">
    <text evidence="1">Belongs to the peptidase M20A family. DapE subfamily.</text>
</comment>
<sequence>MTTTDPVANLAALIRCPSVTPAEGGALSLLDTLLSPLGFAVERVMATEDGTPDVENLYARLGTEGPHLMFAGHTDVVPVGDEAAWSHPPFSADIAGGEMYGRGAVDMKGGIACFVAAIARHIGKHGKPQGSVSFLITGDEEGPSINGTSKLLEWAAAKGETWDACVVGEPTNPDQLGDMIKIGRRGSLSGRITVQGVQGHAAYPHLADNPIRGLLQLTHALMHPAFDHGTDDFQPSNLEVTTVDTGNAATNVIPARATAAFNIRFNDSWTAESLRAEIIRRLDAAANEGELRPDRAPVKYEIVWADRPSHVFLTRNNALISSLSGAIETVTGKEPKLSTTGGTSDARFIKDYCPVVEFGLVGQTMHMVDERVAVADLETLTRIYETFIERWFAHADGK</sequence>
<feature type="chain" id="PRO_0000375456" description="Succinyl-diaminopimelate desuccinylase">
    <location>
        <begin position="1"/>
        <end position="398"/>
    </location>
</feature>
<feature type="active site" evidence="1">
    <location>
        <position position="75"/>
    </location>
</feature>
<feature type="active site" description="Proton acceptor" evidence="1">
    <location>
        <position position="140"/>
    </location>
</feature>
<feature type="binding site" evidence="1">
    <location>
        <position position="73"/>
    </location>
    <ligand>
        <name>Zn(2+)</name>
        <dbReference type="ChEBI" id="CHEBI:29105"/>
        <label>1</label>
    </ligand>
</feature>
<feature type="binding site" evidence="1">
    <location>
        <position position="106"/>
    </location>
    <ligand>
        <name>Zn(2+)</name>
        <dbReference type="ChEBI" id="CHEBI:29105"/>
        <label>1</label>
    </ligand>
</feature>
<feature type="binding site" evidence="1">
    <location>
        <position position="106"/>
    </location>
    <ligand>
        <name>Zn(2+)</name>
        <dbReference type="ChEBI" id="CHEBI:29105"/>
        <label>2</label>
    </ligand>
</feature>
<feature type="binding site" evidence="1">
    <location>
        <position position="141"/>
    </location>
    <ligand>
        <name>Zn(2+)</name>
        <dbReference type="ChEBI" id="CHEBI:29105"/>
        <label>2</label>
    </ligand>
</feature>
<feature type="binding site" evidence="1">
    <location>
        <position position="169"/>
    </location>
    <ligand>
        <name>Zn(2+)</name>
        <dbReference type="ChEBI" id="CHEBI:29105"/>
        <label>1</label>
    </ligand>
</feature>
<feature type="binding site" evidence="1">
    <location>
        <position position="366"/>
    </location>
    <ligand>
        <name>Zn(2+)</name>
        <dbReference type="ChEBI" id="CHEBI:29105"/>
        <label>2</label>
    </ligand>
</feature>
<dbReference type="EC" id="3.5.1.18" evidence="1"/>
<dbReference type="EMBL" id="AE007869">
    <property type="protein sequence ID" value="AAK86187.1"/>
    <property type="molecule type" value="Genomic_DNA"/>
</dbReference>
<dbReference type="PIR" id="AB2622">
    <property type="entry name" value="AB2622"/>
</dbReference>
<dbReference type="PIR" id="B97404">
    <property type="entry name" value="B97404"/>
</dbReference>
<dbReference type="RefSeq" id="NP_353402.1">
    <property type="nucleotide sequence ID" value="NC_003062.2"/>
</dbReference>
<dbReference type="RefSeq" id="WP_010970848.1">
    <property type="nucleotide sequence ID" value="NC_003062.2"/>
</dbReference>
<dbReference type="SMR" id="A9CKC4"/>
<dbReference type="STRING" id="176299.Atu0370"/>
<dbReference type="EnsemblBacteria" id="AAK86187">
    <property type="protein sequence ID" value="AAK86187"/>
    <property type="gene ID" value="Atu0370"/>
</dbReference>
<dbReference type="GeneID" id="1132408"/>
<dbReference type="KEGG" id="atu:Atu0370"/>
<dbReference type="PATRIC" id="fig|176299.10.peg.361"/>
<dbReference type="eggNOG" id="COG0624">
    <property type="taxonomic scope" value="Bacteria"/>
</dbReference>
<dbReference type="HOGENOM" id="CLU_021802_4_0_5"/>
<dbReference type="OrthoDB" id="9809784at2"/>
<dbReference type="PhylomeDB" id="A9CKC4"/>
<dbReference type="BioCyc" id="AGRO:ATU0370-MONOMER"/>
<dbReference type="UniPathway" id="UPA00034">
    <property type="reaction ID" value="UER00021"/>
</dbReference>
<dbReference type="Proteomes" id="UP000000813">
    <property type="component" value="Chromosome circular"/>
</dbReference>
<dbReference type="GO" id="GO:0008777">
    <property type="term" value="F:acetylornithine deacetylase activity"/>
    <property type="evidence" value="ECO:0007669"/>
    <property type="project" value="TreeGrafter"/>
</dbReference>
<dbReference type="GO" id="GO:0050897">
    <property type="term" value="F:cobalt ion binding"/>
    <property type="evidence" value="ECO:0007669"/>
    <property type="project" value="UniProtKB-UniRule"/>
</dbReference>
<dbReference type="GO" id="GO:0009014">
    <property type="term" value="F:succinyl-diaminopimelate desuccinylase activity"/>
    <property type="evidence" value="ECO:0007669"/>
    <property type="project" value="UniProtKB-UniRule"/>
</dbReference>
<dbReference type="GO" id="GO:0008270">
    <property type="term" value="F:zinc ion binding"/>
    <property type="evidence" value="ECO:0007669"/>
    <property type="project" value="UniProtKB-UniRule"/>
</dbReference>
<dbReference type="GO" id="GO:0019877">
    <property type="term" value="P:diaminopimelate biosynthetic process"/>
    <property type="evidence" value="ECO:0007669"/>
    <property type="project" value="UniProtKB-UniRule"/>
</dbReference>
<dbReference type="GO" id="GO:0006526">
    <property type="term" value="P:L-arginine biosynthetic process"/>
    <property type="evidence" value="ECO:0007669"/>
    <property type="project" value="TreeGrafter"/>
</dbReference>
<dbReference type="GO" id="GO:0009089">
    <property type="term" value="P:lysine biosynthetic process via diaminopimelate"/>
    <property type="evidence" value="ECO:0007669"/>
    <property type="project" value="UniProtKB-UniRule"/>
</dbReference>
<dbReference type="CDD" id="cd03891">
    <property type="entry name" value="M20_DapE_proteobac"/>
    <property type="match status" value="1"/>
</dbReference>
<dbReference type="Gene3D" id="3.40.630.10">
    <property type="entry name" value="Zn peptidases"/>
    <property type="match status" value="2"/>
</dbReference>
<dbReference type="HAMAP" id="MF_01690">
    <property type="entry name" value="DapE"/>
    <property type="match status" value="1"/>
</dbReference>
<dbReference type="InterPro" id="IPR001261">
    <property type="entry name" value="ArgE/DapE_CS"/>
</dbReference>
<dbReference type="InterPro" id="IPR036264">
    <property type="entry name" value="Bact_exopeptidase_dim_dom"/>
</dbReference>
<dbReference type="InterPro" id="IPR005941">
    <property type="entry name" value="DapE_proteobac"/>
</dbReference>
<dbReference type="InterPro" id="IPR002933">
    <property type="entry name" value="Peptidase_M20"/>
</dbReference>
<dbReference type="InterPro" id="IPR011650">
    <property type="entry name" value="Peptidase_M20_dimer"/>
</dbReference>
<dbReference type="InterPro" id="IPR050072">
    <property type="entry name" value="Peptidase_M20A"/>
</dbReference>
<dbReference type="NCBIfam" id="TIGR01246">
    <property type="entry name" value="dapE_proteo"/>
    <property type="match status" value="1"/>
</dbReference>
<dbReference type="NCBIfam" id="NF009557">
    <property type="entry name" value="PRK13009.1"/>
    <property type="match status" value="1"/>
</dbReference>
<dbReference type="PANTHER" id="PTHR43808">
    <property type="entry name" value="ACETYLORNITHINE DEACETYLASE"/>
    <property type="match status" value="1"/>
</dbReference>
<dbReference type="PANTHER" id="PTHR43808:SF31">
    <property type="entry name" value="N-ACETYL-L-CITRULLINE DEACETYLASE"/>
    <property type="match status" value="1"/>
</dbReference>
<dbReference type="Pfam" id="PF07687">
    <property type="entry name" value="M20_dimer"/>
    <property type="match status" value="1"/>
</dbReference>
<dbReference type="Pfam" id="PF01546">
    <property type="entry name" value="Peptidase_M20"/>
    <property type="match status" value="1"/>
</dbReference>
<dbReference type="SUPFAM" id="SSF55031">
    <property type="entry name" value="Bacterial exopeptidase dimerisation domain"/>
    <property type="match status" value="1"/>
</dbReference>
<dbReference type="SUPFAM" id="SSF53187">
    <property type="entry name" value="Zn-dependent exopeptidases"/>
    <property type="match status" value="1"/>
</dbReference>
<dbReference type="PROSITE" id="PS00758">
    <property type="entry name" value="ARGE_DAPE_CPG2_1"/>
    <property type="match status" value="1"/>
</dbReference>
<dbReference type="PROSITE" id="PS00759">
    <property type="entry name" value="ARGE_DAPE_CPG2_2"/>
    <property type="match status" value="1"/>
</dbReference>
<proteinExistence type="inferred from homology"/>
<evidence type="ECO:0000255" key="1">
    <source>
        <dbReference type="HAMAP-Rule" id="MF_01690"/>
    </source>
</evidence>